<accession>P55319</accession>
<accession>P01271</accession>
<accession>P10616</accession>
<name>AKH1_LOCMI</name>
<protein>
    <recommendedName>
        <fullName>Adipokinetic prohormone type 1</fullName>
    </recommendedName>
    <component>
        <recommendedName>
            <fullName>Adipokinetic hormone 1</fullName>
        </recommendedName>
        <alternativeName>
            <fullName>Adipokinetic hormone I</fullName>
            <shortName>AKH-I</shortName>
        </alternativeName>
    </component>
    <component>
        <recommendedName>
            <fullName>Adipokinetic hormone precursor-related peptide alpha chain</fullName>
            <shortName>APRP-alpha</shortName>
        </recommendedName>
        <alternativeName>
            <fullName>6 kDa dimeric peptide A</fullName>
        </alternativeName>
    </component>
</protein>
<keyword id="KW-0027">Amidation</keyword>
<keyword id="KW-0165">Cleavage on pair of basic residues</keyword>
<keyword id="KW-0903">Direct protein sequencing</keyword>
<keyword id="KW-1015">Disulfide bond</keyword>
<keyword id="KW-0286">Flight</keyword>
<keyword id="KW-0372">Hormone</keyword>
<keyword id="KW-0527">Neuropeptide</keyword>
<keyword id="KW-0873">Pyrrolidone carboxylic acid</keyword>
<keyword id="KW-0964">Secreted</keyword>
<keyword id="KW-0732">Signal</keyword>
<sequence>MVQRCALVVLLVVAVAAALCSAQLNFTPNWGTGKRDAADFADPYSFLYRLIQAEARKMSGCSN</sequence>
<evidence type="ECO:0000269" key="1">
    <source>
    </source>
</evidence>
<evidence type="ECO:0000305" key="2"/>
<comment type="function">
    <text evidence="1">This hormone, released from cells in the corpora cardiaca, causes release of diglycerides from the fat body and stimulation of muscles to use these diglycerides as an energy source during energy-demanding processes.</text>
</comment>
<comment type="subcellular location">
    <subcellularLocation>
        <location>Secreted</location>
    </subcellularLocation>
</comment>
<comment type="similarity">
    <text evidence="2">Belongs to the AKH/HRTH/RPCH family.</text>
</comment>
<organism>
    <name type="scientific">Locusta migratoria</name>
    <name type="common">Migratory locust</name>
    <dbReference type="NCBI Taxonomy" id="7004"/>
    <lineage>
        <taxon>Eukaryota</taxon>
        <taxon>Metazoa</taxon>
        <taxon>Ecdysozoa</taxon>
        <taxon>Arthropoda</taxon>
        <taxon>Hexapoda</taxon>
        <taxon>Insecta</taxon>
        <taxon>Pterygota</taxon>
        <taxon>Neoptera</taxon>
        <taxon>Polyneoptera</taxon>
        <taxon>Orthoptera</taxon>
        <taxon>Caelifera</taxon>
        <taxon>Acrididea</taxon>
        <taxon>Acridomorpha</taxon>
        <taxon>Acridoidea</taxon>
        <taxon>Acrididae</taxon>
        <taxon>Oedipodinae</taxon>
        <taxon>Locusta</taxon>
    </lineage>
</organism>
<reference key="1">
    <citation type="journal article" date="1995" name="J. Biol. Chem.">
        <title>Molecular cloning of three distinct cDNAs, each encoding a different adipokinetic hormone precursor, of the migratory locust, Locusta migratoria. Differential expression of the distinct adipokinetic hormone precursor genes during flight activity.</title>
        <authorList>
            <person name="Bogerd J."/>
            <person name="Kooiman F.P."/>
            <person name="Pijnenburg M.A.P."/>
            <person name="Hekking L.H."/>
            <person name="Oudejans R.C."/>
            <person name="Vander Horst D.J."/>
        </authorList>
    </citation>
    <scope>NUCLEOTIDE SEQUENCE [MRNA]</scope>
    <source>
        <tissue>Corpora cardiaca</tissue>
    </source>
</reference>
<reference key="2">
    <citation type="journal article" date="1976" name="Nature">
        <title>Structure of locust adipokinetic hormone, a neurohormone that regulates lipid utilisation during flight.</title>
        <authorList>
            <person name="Stone J.V."/>
            <person name="Mordue W."/>
            <person name="Batley K.E."/>
            <person name="Morris H.R."/>
        </authorList>
    </citation>
    <scope>PROTEIN SEQUENCE OF 23-32</scope>
    <scope>FUNCTION</scope>
    <scope>PYROGLUTAMATE FORMATION AT GLN-23</scope>
    <scope>AMIDATION AT THR-32</scope>
</reference>
<reference key="3">
    <citation type="journal article" date="1993" name="Gen. Comp. Endocrinol.">
        <title>Isolation, identification, and synthesis of AKH-I4-10 from Locusta migratoria.</title>
        <authorList>
            <person name="Schoofs L."/>
            <person name="Holman G.M."/>
            <person name="Proost P."/>
            <person name="van Damme J."/>
            <person name="Neven H."/>
            <person name="Oudejans R.C."/>
            <person name="de Loof A."/>
        </authorList>
    </citation>
    <scope>PROTEIN SEQUENCE OF 26-32</scope>
</reference>
<reference key="4">
    <citation type="journal article" date="1989" name="Eur. J. Biochem.">
        <title>Isolation and structure of two novel 6-kDa dimeric peptides from the corpora cardiaca of the insect Locusta migratoria. Molecular mass determination by mass spectrometry.</title>
        <authorList>
            <person name="Hietter H."/>
            <person name="Luu B."/>
            <person name="Goltzene F."/>
            <person name="Zachary D."/>
            <person name="Hoffmann J.A."/>
            <person name="van Dorsselaer A."/>
        </authorList>
    </citation>
    <scope>PROTEIN SEQUENCE OF 36-63</scope>
</reference>
<dbReference type="EMBL" id="X86799">
    <property type="protein sequence ID" value="CAA60494.1"/>
    <property type="molecule type" value="mRNA"/>
</dbReference>
<dbReference type="PIR" id="A58652">
    <property type="entry name" value="AKLQ"/>
</dbReference>
<dbReference type="GO" id="GO:0005576">
    <property type="term" value="C:extracellular region"/>
    <property type="evidence" value="ECO:0007669"/>
    <property type="project" value="UniProtKB-SubCell"/>
</dbReference>
<dbReference type="GO" id="GO:0005179">
    <property type="term" value="F:hormone activity"/>
    <property type="evidence" value="ECO:0007669"/>
    <property type="project" value="UniProtKB-KW"/>
</dbReference>
<dbReference type="GO" id="GO:0007629">
    <property type="term" value="P:flight behavior"/>
    <property type="evidence" value="ECO:0007669"/>
    <property type="project" value="UniProtKB-KW"/>
</dbReference>
<dbReference type="GO" id="GO:0007218">
    <property type="term" value="P:neuropeptide signaling pathway"/>
    <property type="evidence" value="ECO:0007669"/>
    <property type="project" value="UniProtKB-KW"/>
</dbReference>
<dbReference type="InterPro" id="IPR002047">
    <property type="entry name" value="Adipokinetic_hormone_CS"/>
</dbReference>
<dbReference type="InterPro" id="IPR010475">
    <property type="entry name" value="AKH/RPCH_hormone"/>
</dbReference>
<dbReference type="Pfam" id="PF06377">
    <property type="entry name" value="Adipokin_hormo"/>
    <property type="match status" value="1"/>
</dbReference>
<dbReference type="PROSITE" id="PS00256">
    <property type="entry name" value="AKH"/>
    <property type="match status" value="1"/>
</dbReference>
<feature type="signal peptide" evidence="1">
    <location>
        <begin position="1"/>
        <end position="22"/>
    </location>
</feature>
<feature type="chain" id="PRO_0000000905" description="Adipokinetic prohormone type 1">
    <location>
        <begin position="23"/>
        <end position="63"/>
    </location>
</feature>
<feature type="peptide" id="PRO_0000000906" description="Adipokinetic hormone 1">
    <location>
        <begin position="23"/>
        <end position="32"/>
    </location>
</feature>
<feature type="peptide" id="PRO_0000000907" description="Adipokinetic hormone precursor-related peptide alpha chain">
    <location>
        <begin position="36"/>
        <end position="63"/>
    </location>
</feature>
<feature type="modified residue" description="Pyrrolidone carboxylic acid" evidence="1">
    <location>
        <position position="23"/>
    </location>
</feature>
<feature type="modified residue" description="Threonine amide" evidence="1">
    <location>
        <position position="32"/>
    </location>
</feature>
<feature type="disulfide bond" description="Interchain">
    <location>
        <position position="61"/>
    </location>
</feature>
<proteinExistence type="evidence at protein level"/>